<gene>
    <name evidence="1" type="primary">deoB</name>
    <name type="ordered locus">Ecok1_44460</name>
    <name type="ORF">APECO1_1998</name>
</gene>
<keyword id="KW-0963">Cytoplasm</keyword>
<keyword id="KW-0413">Isomerase</keyword>
<keyword id="KW-0464">Manganese</keyword>
<keyword id="KW-0479">Metal-binding</keyword>
<keyword id="KW-1185">Reference proteome</keyword>
<feature type="chain" id="PRO_1000046385" description="Phosphopentomutase">
    <location>
        <begin position="1"/>
        <end position="407"/>
    </location>
</feature>
<feature type="binding site" evidence="1">
    <location>
        <position position="10"/>
    </location>
    <ligand>
        <name>Mn(2+)</name>
        <dbReference type="ChEBI" id="CHEBI:29035"/>
        <label>1</label>
    </ligand>
</feature>
<feature type="binding site" evidence="1">
    <location>
        <position position="306"/>
    </location>
    <ligand>
        <name>Mn(2+)</name>
        <dbReference type="ChEBI" id="CHEBI:29035"/>
        <label>2</label>
    </ligand>
</feature>
<feature type="binding site" evidence="1">
    <location>
        <position position="311"/>
    </location>
    <ligand>
        <name>Mn(2+)</name>
        <dbReference type="ChEBI" id="CHEBI:29035"/>
        <label>2</label>
    </ligand>
</feature>
<feature type="binding site" evidence="1">
    <location>
        <position position="347"/>
    </location>
    <ligand>
        <name>Mn(2+)</name>
        <dbReference type="ChEBI" id="CHEBI:29035"/>
        <label>1</label>
    </ligand>
</feature>
<feature type="binding site" evidence="1">
    <location>
        <position position="348"/>
    </location>
    <ligand>
        <name>Mn(2+)</name>
        <dbReference type="ChEBI" id="CHEBI:29035"/>
        <label>1</label>
    </ligand>
</feature>
<feature type="binding site" evidence="1">
    <location>
        <position position="359"/>
    </location>
    <ligand>
        <name>Mn(2+)</name>
        <dbReference type="ChEBI" id="CHEBI:29035"/>
        <label>2</label>
    </ligand>
</feature>
<comment type="function">
    <text evidence="1">Isomerase that catalyzes the conversion of deoxy-ribose 1-phosphate (dRib-1-P) and ribose 1-phosphate (Rib-1-P) to deoxy-ribose 5-phosphate (dRib-5-P) and ribose 5-phosphate (Rib-5-P), respectively.</text>
</comment>
<comment type="catalytic activity">
    <reaction evidence="1">
        <text>2-deoxy-alpha-D-ribose 1-phosphate = 2-deoxy-D-ribose 5-phosphate</text>
        <dbReference type="Rhea" id="RHEA:27658"/>
        <dbReference type="ChEBI" id="CHEBI:57259"/>
        <dbReference type="ChEBI" id="CHEBI:62877"/>
        <dbReference type="EC" id="5.4.2.7"/>
    </reaction>
</comment>
<comment type="catalytic activity">
    <reaction evidence="1">
        <text>alpha-D-ribose 1-phosphate = D-ribose 5-phosphate</text>
        <dbReference type="Rhea" id="RHEA:18793"/>
        <dbReference type="ChEBI" id="CHEBI:57720"/>
        <dbReference type="ChEBI" id="CHEBI:78346"/>
        <dbReference type="EC" id="5.4.2.7"/>
    </reaction>
</comment>
<comment type="cofactor">
    <cofactor evidence="1">
        <name>Mn(2+)</name>
        <dbReference type="ChEBI" id="CHEBI:29035"/>
    </cofactor>
    <text evidence="1">Binds 2 manganese ions.</text>
</comment>
<comment type="pathway">
    <text evidence="1">Carbohydrate degradation; 2-deoxy-D-ribose 1-phosphate degradation; D-glyceraldehyde 3-phosphate and acetaldehyde from 2-deoxy-alpha-D-ribose 1-phosphate: step 1/2.</text>
</comment>
<comment type="subcellular location">
    <subcellularLocation>
        <location evidence="1">Cytoplasm</location>
    </subcellularLocation>
</comment>
<comment type="similarity">
    <text evidence="1">Belongs to the phosphopentomutase family.</text>
</comment>
<protein>
    <recommendedName>
        <fullName evidence="1">Phosphopentomutase</fullName>
        <ecNumber evidence="1">5.4.2.7</ecNumber>
    </recommendedName>
    <alternativeName>
        <fullName evidence="1">Phosphodeoxyribomutase</fullName>
    </alternativeName>
</protein>
<proteinExistence type="inferred from homology"/>
<dbReference type="EC" id="5.4.2.7" evidence="1"/>
<dbReference type="EMBL" id="CP000468">
    <property type="protein sequence ID" value="ABJ03940.1"/>
    <property type="molecule type" value="Genomic_DNA"/>
</dbReference>
<dbReference type="RefSeq" id="WP_000816460.1">
    <property type="nucleotide sequence ID" value="NZ_CADILS010000013.1"/>
</dbReference>
<dbReference type="SMR" id="A1AJV0"/>
<dbReference type="GeneID" id="86944918"/>
<dbReference type="KEGG" id="ecv:APECO1_1998"/>
<dbReference type="HOGENOM" id="CLU_053861_0_0_6"/>
<dbReference type="UniPathway" id="UPA00002">
    <property type="reaction ID" value="UER00467"/>
</dbReference>
<dbReference type="Proteomes" id="UP000008216">
    <property type="component" value="Chromosome"/>
</dbReference>
<dbReference type="GO" id="GO:0005829">
    <property type="term" value="C:cytosol"/>
    <property type="evidence" value="ECO:0007669"/>
    <property type="project" value="TreeGrafter"/>
</dbReference>
<dbReference type="GO" id="GO:0000287">
    <property type="term" value="F:magnesium ion binding"/>
    <property type="evidence" value="ECO:0007669"/>
    <property type="project" value="InterPro"/>
</dbReference>
<dbReference type="GO" id="GO:0030145">
    <property type="term" value="F:manganese ion binding"/>
    <property type="evidence" value="ECO:0007669"/>
    <property type="project" value="UniProtKB-UniRule"/>
</dbReference>
<dbReference type="GO" id="GO:0008973">
    <property type="term" value="F:phosphopentomutase activity"/>
    <property type="evidence" value="ECO:0007669"/>
    <property type="project" value="UniProtKB-UniRule"/>
</dbReference>
<dbReference type="GO" id="GO:0006018">
    <property type="term" value="P:2-deoxyribose 1-phosphate catabolic process"/>
    <property type="evidence" value="ECO:0007669"/>
    <property type="project" value="UniProtKB-UniRule"/>
</dbReference>
<dbReference type="GO" id="GO:0006015">
    <property type="term" value="P:5-phosphoribose 1-diphosphate biosynthetic process"/>
    <property type="evidence" value="ECO:0007669"/>
    <property type="project" value="UniProtKB-UniPathway"/>
</dbReference>
<dbReference type="GO" id="GO:0043094">
    <property type="term" value="P:metabolic compound salvage"/>
    <property type="evidence" value="ECO:0007669"/>
    <property type="project" value="InterPro"/>
</dbReference>
<dbReference type="GO" id="GO:0009117">
    <property type="term" value="P:nucleotide metabolic process"/>
    <property type="evidence" value="ECO:0007669"/>
    <property type="project" value="InterPro"/>
</dbReference>
<dbReference type="CDD" id="cd16009">
    <property type="entry name" value="PPM"/>
    <property type="match status" value="1"/>
</dbReference>
<dbReference type="FunFam" id="3.30.70.1250:FF:000001">
    <property type="entry name" value="Phosphopentomutase"/>
    <property type="match status" value="1"/>
</dbReference>
<dbReference type="Gene3D" id="3.40.720.10">
    <property type="entry name" value="Alkaline Phosphatase, subunit A"/>
    <property type="match status" value="1"/>
</dbReference>
<dbReference type="Gene3D" id="3.30.70.1250">
    <property type="entry name" value="Phosphopentomutase"/>
    <property type="match status" value="1"/>
</dbReference>
<dbReference type="HAMAP" id="MF_00740">
    <property type="entry name" value="Phosphopentomut"/>
    <property type="match status" value="1"/>
</dbReference>
<dbReference type="InterPro" id="IPR017850">
    <property type="entry name" value="Alkaline_phosphatase_core_sf"/>
</dbReference>
<dbReference type="InterPro" id="IPR010045">
    <property type="entry name" value="DeoB"/>
</dbReference>
<dbReference type="InterPro" id="IPR006124">
    <property type="entry name" value="Metalloenzyme"/>
</dbReference>
<dbReference type="InterPro" id="IPR024052">
    <property type="entry name" value="Phosphopentomutase_DeoB_cap_sf"/>
</dbReference>
<dbReference type="NCBIfam" id="TIGR01696">
    <property type="entry name" value="deoB"/>
    <property type="match status" value="1"/>
</dbReference>
<dbReference type="NCBIfam" id="NF003766">
    <property type="entry name" value="PRK05362.1"/>
    <property type="match status" value="1"/>
</dbReference>
<dbReference type="PANTHER" id="PTHR21110">
    <property type="entry name" value="PHOSPHOPENTOMUTASE"/>
    <property type="match status" value="1"/>
</dbReference>
<dbReference type="PANTHER" id="PTHR21110:SF0">
    <property type="entry name" value="PHOSPHOPENTOMUTASE"/>
    <property type="match status" value="1"/>
</dbReference>
<dbReference type="Pfam" id="PF01676">
    <property type="entry name" value="Metalloenzyme"/>
    <property type="match status" value="1"/>
</dbReference>
<dbReference type="PIRSF" id="PIRSF001491">
    <property type="entry name" value="Ppentomutase"/>
    <property type="match status" value="1"/>
</dbReference>
<dbReference type="SUPFAM" id="SSF53649">
    <property type="entry name" value="Alkaline phosphatase-like"/>
    <property type="match status" value="1"/>
</dbReference>
<dbReference type="SUPFAM" id="SSF143856">
    <property type="entry name" value="DeoB insert domain-like"/>
    <property type="match status" value="1"/>
</dbReference>
<sequence length="407" mass="44393">MKRAFIMVLDSFGIGATEDAERFGDVGADTLGHIAEACAKGEADHGRKGPLNLPNLTRLGLAKAHEGSTGFIPAGMDGNAEVIGAYAWAHEMSSGKDTPSGHWEIAGVPVLFEWGYFSDHENSFPQELLDKLVERANLPGYLGNCHSSGTVILDQLGEEHMKTGKPIFYTSADSVFQIACHEETFGLDKLYELCEIAREELTNGGYNIGRVIARPFIGDKAGNFQRTGNRHDLAVEPPAPTVLQKLVDEKHGQVVSVGKIADIYANCGITKKVKATGLDALFDATIKEMKEAGDNTIVFTNFVDFDSSWGHRRDVAGYAAGLELFDRRLPELMSLLRDDDILILTADHGCDPTWTGTDHTREHIPVLVYGPKVKPGSLGHRETFADIGQTLAKYFGTSDMEYGKAMF</sequence>
<reference key="1">
    <citation type="journal article" date="2007" name="J. Bacteriol.">
        <title>The genome sequence of avian pathogenic Escherichia coli strain O1:K1:H7 shares strong similarities with human extraintestinal pathogenic E. coli genomes.</title>
        <authorList>
            <person name="Johnson T.J."/>
            <person name="Kariyawasam S."/>
            <person name="Wannemuehler Y."/>
            <person name="Mangiamele P."/>
            <person name="Johnson S.J."/>
            <person name="Doetkott C."/>
            <person name="Skyberg J.A."/>
            <person name="Lynne A.M."/>
            <person name="Johnson J.R."/>
            <person name="Nolan L.K."/>
        </authorList>
    </citation>
    <scope>NUCLEOTIDE SEQUENCE [LARGE SCALE GENOMIC DNA]</scope>
</reference>
<organism>
    <name type="scientific">Escherichia coli O1:K1 / APEC</name>
    <dbReference type="NCBI Taxonomy" id="405955"/>
    <lineage>
        <taxon>Bacteria</taxon>
        <taxon>Pseudomonadati</taxon>
        <taxon>Pseudomonadota</taxon>
        <taxon>Gammaproteobacteria</taxon>
        <taxon>Enterobacterales</taxon>
        <taxon>Enterobacteriaceae</taxon>
        <taxon>Escherichia</taxon>
    </lineage>
</organism>
<name>DEOB_ECOK1</name>
<evidence type="ECO:0000255" key="1">
    <source>
        <dbReference type="HAMAP-Rule" id="MF_00740"/>
    </source>
</evidence>
<accession>A1AJV0</accession>